<proteinExistence type="evidence at protein level"/>
<feature type="chain" id="PRO_0000412111" description="Ribonucleoside-diphosphate reductase large subunit-like protein">
    <location>
        <begin position="1"/>
        <end position="1174"/>
    </location>
</feature>
<feature type="chain" id="PRO_0000412112" description="N-terminal peptide">
    <location>
        <begin position="1"/>
        <end position="277"/>
    </location>
</feature>
<feature type="chain" id="PRO_0000412113" description="116 kDa peptide">
    <location>
        <begin position="278"/>
        <end position="1174"/>
    </location>
</feature>
<feature type="region of interest" description="Disordered" evidence="2">
    <location>
        <begin position="170"/>
        <end position="269"/>
    </location>
</feature>
<feature type="region of interest" description="Disordered" evidence="2">
    <location>
        <begin position="291"/>
        <end position="325"/>
    </location>
</feature>
<feature type="short sequence motif" description="RIP homotypic interaction motif (RHIM)" evidence="8 9">
    <location>
        <begin position="50"/>
        <end position="72"/>
    </location>
</feature>
<feature type="compositionally biased region" description="Low complexity" evidence="2">
    <location>
        <begin position="182"/>
        <end position="202"/>
    </location>
</feature>
<feature type="compositionally biased region" description="Low complexity" evidence="2">
    <location>
        <begin position="233"/>
        <end position="243"/>
    </location>
</feature>
<feature type="compositionally biased region" description="Low complexity" evidence="2">
    <location>
        <begin position="291"/>
        <end position="316"/>
    </location>
</feature>
<feature type="site" description="Cleavage">
    <location>
        <begin position="277"/>
        <end position="278"/>
    </location>
</feature>
<feature type="mutagenesis site" description="In M45mut(RHIM); abolished ability to prevent necroptosis in infected cells." evidence="8 9">
    <original>IQIG</original>
    <variation>AAAA</variation>
    <location>
        <begin position="61"/>
        <end position="64"/>
    </location>
</feature>
<dbReference type="EMBL" id="U68299">
    <property type="status" value="NOT_ANNOTATED_CDS"/>
    <property type="molecule type" value="Genomic_DNA"/>
</dbReference>
<dbReference type="EMBL" id="DQ978788">
    <property type="protein sequence ID" value="ABI94733.1"/>
    <property type="molecule type" value="Genomic_DNA"/>
</dbReference>
<dbReference type="EMBL" id="GU305914">
    <property type="protein sequence ID" value="ADD10427.1"/>
    <property type="molecule type" value="Genomic_DNA"/>
</dbReference>
<dbReference type="SMR" id="Q06A28"/>
<dbReference type="DIP" id="DIP-29743N"/>
<dbReference type="IntAct" id="Q06A28">
    <property type="interactions" value="4"/>
</dbReference>
<dbReference type="Proteomes" id="UP000008774">
    <property type="component" value="Segment"/>
</dbReference>
<dbReference type="Proteomes" id="UP000180711">
    <property type="component" value="Segment"/>
</dbReference>
<dbReference type="GO" id="GO:0030430">
    <property type="term" value="C:host cell cytoplasm"/>
    <property type="evidence" value="ECO:0007669"/>
    <property type="project" value="UniProtKB-SubCell"/>
</dbReference>
<dbReference type="GO" id="GO:0044423">
    <property type="term" value="C:virion component"/>
    <property type="evidence" value="ECO:0007669"/>
    <property type="project" value="UniProtKB-UniRule"/>
</dbReference>
<dbReference type="GO" id="GO:0005524">
    <property type="term" value="F:ATP binding"/>
    <property type="evidence" value="ECO:0007669"/>
    <property type="project" value="InterPro"/>
</dbReference>
<dbReference type="GO" id="GO:0004748">
    <property type="term" value="F:ribonucleoside-diphosphate reductase activity, thioredoxin disulfide as acceptor"/>
    <property type="evidence" value="ECO:0007669"/>
    <property type="project" value="InterPro"/>
</dbReference>
<dbReference type="GO" id="GO:0009263">
    <property type="term" value="P:deoxyribonucleotide biosynthetic process"/>
    <property type="evidence" value="ECO:0007669"/>
    <property type="project" value="InterPro"/>
</dbReference>
<dbReference type="GO" id="GO:0085034">
    <property type="term" value="P:symbiont-mediated suppression of host NF-kappaB cascade"/>
    <property type="evidence" value="ECO:0007669"/>
    <property type="project" value="UniProtKB-KW"/>
</dbReference>
<dbReference type="FunFam" id="3.20.70.20:FF:000027">
    <property type="entry name" value="Ribonucleoside-diphosphate reductase large subunit-like protein"/>
    <property type="match status" value="1"/>
</dbReference>
<dbReference type="Gene3D" id="3.20.70.20">
    <property type="match status" value="1"/>
</dbReference>
<dbReference type="HAMAP" id="MF_04027">
    <property type="entry name" value="HSV_RIR1_betahv"/>
    <property type="match status" value="1"/>
</dbReference>
<dbReference type="InterPro" id="IPR034716">
    <property type="entry name" value="HSV_RIR1_betahv"/>
</dbReference>
<dbReference type="InterPro" id="IPR025735">
    <property type="entry name" value="RHIM"/>
</dbReference>
<dbReference type="InterPro" id="IPR000788">
    <property type="entry name" value="RNR_lg_C"/>
</dbReference>
<dbReference type="InterPro" id="IPR013509">
    <property type="entry name" value="RNR_lsu_N"/>
</dbReference>
<dbReference type="InterPro" id="IPR039718">
    <property type="entry name" value="Rrm1"/>
</dbReference>
<dbReference type="PANTHER" id="PTHR11573">
    <property type="entry name" value="RIBONUCLEOSIDE-DIPHOSPHATE REDUCTASE LARGE CHAIN"/>
    <property type="match status" value="1"/>
</dbReference>
<dbReference type="PANTHER" id="PTHR11573:SF6">
    <property type="entry name" value="RIBONUCLEOSIDE-DIPHOSPHATE REDUCTASE LARGE SUBUNIT"/>
    <property type="match status" value="1"/>
</dbReference>
<dbReference type="Pfam" id="PF12721">
    <property type="entry name" value="RHIM"/>
    <property type="match status" value="1"/>
</dbReference>
<dbReference type="Pfam" id="PF02867">
    <property type="entry name" value="Ribonuc_red_lgC"/>
    <property type="match status" value="1"/>
</dbReference>
<dbReference type="Pfam" id="PF00317">
    <property type="entry name" value="Ribonuc_red_lgN"/>
    <property type="match status" value="1"/>
</dbReference>
<dbReference type="PRINTS" id="PR01183">
    <property type="entry name" value="RIBORDTASEM1"/>
</dbReference>
<dbReference type="SUPFAM" id="SSF51998">
    <property type="entry name" value="PFL-like glycyl radical enzymes"/>
    <property type="match status" value="1"/>
</dbReference>
<accession>Q06A28</accession>
<sequence>MDRQPKVYSDPDNGFFFLDVPMPDDGQGGQQTATTAAGGAFGVGGGHSVPYVRIMNGVSGIQIGNHNAMSIASCWSPSYTDRRRRSYPKTATNAAADRVAAAVSAANAAVNAAAAAAAAGGGGGANLLAAAVTCANQRGCCGGNGGHSLPPTRMPKTNATAAAAPAVAGASNAKSDNNHANATSGAGSAAATPAATTPAATAVENRRPSPSPSTASTAPCDEGSSPRHHRPSHVSVGTQATPSTPIPIPAPRCSTGQQQQQPQAKKLKPAKADPLLYAATMPPPASVTTAAAAAVAPESESSPAASAPPAAAAMATGGDDEDQSSFSFVSDDVLGEFEDLRIAGLPVRDEMRPPTPTMTVIPVSRPFRAGRDSGRDALFDDAVESVRCYCHGILGNSRFCALVNEKCSEPAKERMARIRRYAADVTRCGPLALYTAIVSSANRLIQTDPSCDLDLAECYVETASKRNAVPLSAFYRDCDRLRDAVAAFFKTYGMVVDAMAQRITERVGPALGRGLYSTVVMMDRCGNSFQGREETPISVFARVAAALAVECEVDGGVSYKILSSKPVDAAQAFDAFLSALCSFAIIPSPRVLAYAGFGGSNPIFDAVSYRAQFYSAESTINGTLHDICDMVTNGLSVSVSAADLGGDIVASLHILGQQCKALRPYARFKTVLRIYFDIWSVDALKIFSFILDVGREYEGLMAFAVNTPRIFWDRYLDSSGDKMWLMFARREAAALCGLDLKSFRNVYEKMERDGRSAITVSPWWAVCQLDACVARGNTAVVFPHNVKSMIPENIGRPAVCGPGVSVVSGGFVGCTPIHELCINLENCVLEGAAVESSVDVVLGLGCRFSFKALESLVRDAVVLGNLLIDMTVRTNAYGAGKLLTLYRDLHIGVVGFHAVMNRLGQKFADMESYDLNQRIAEFIYYTAVRASVDLCMAGADPFPKFPKSLYAAGRFYPDLFDDDERGPRRMTKEFLEKLREDVVKHGIRNASFITGCSADEAANLAGTTPGFWPRRDNVFLEQTPLMMTPTKDQMLDECVRSVKIEPHRLHEEDLSCLGENRPVELPVLNSRLRQISKESATVAVRRGRSAPFYDDSDDEDEVACSETGWTVSTDAVIKMCVDRQPFVDHAQSLPVAIGFGGSSVELARHLRRGNALGLSVGVYKCSMPPSVNYR</sequence>
<organism>
    <name type="scientific">Murid herpesvirus 1 (strain Smith)</name>
    <name type="common">MuHV-1</name>
    <name type="synonym">Mouse cytomegalovirus</name>
    <dbReference type="NCBI Taxonomy" id="10367"/>
    <lineage>
        <taxon>Viruses</taxon>
        <taxon>Duplodnaviria</taxon>
        <taxon>Heunggongvirae</taxon>
        <taxon>Peploviricota</taxon>
        <taxon>Herviviricetes</taxon>
        <taxon>Herpesvirales</taxon>
        <taxon>Orthoherpesviridae</taxon>
        <taxon>Betaherpesvirinae</taxon>
        <taxon>Muromegalovirus</taxon>
        <taxon>Muromegalovirus muridbeta1</taxon>
        <taxon>Murid herpesvirus 1</taxon>
    </lineage>
</organism>
<organismHost>
    <name type="scientific">Mus musculus</name>
    <name type="common">Mouse</name>
    <dbReference type="NCBI Taxonomy" id="10090"/>
</organismHost>
<name>RIR1_MUHVS</name>
<evidence type="ECO:0000255" key="1">
    <source>
        <dbReference type="HAMAP-Rule" id="MF_04027"/>
    </source>
</evidence>
<evidence type="ECO:0000256" key="2">
    <source>
        <dbReference type="SAM" id="MobiDB-lite"/>
    </source>
</evidence>
<evidence type="ECO:0000269" key="3">
    <source>
    </source>
</evidence>
<evidence type="ECO:0000269" key="4">
    <source>
    </source>
</evidence>
<evidence type="ECO:0000269" key="5">
    <source>
    </source>
</evidence>
<evidence type="ECO:0000269" key="6">
    <source>
    </source>
</evidence>
<evidence type="ECO:0000269" key="7">
    <source>
    </source>
</evidence>
<evidence type="ECO:0000269" key="8">
    <source>
    </source>
</evidence>
<evidence type="ECO:0000269" key="9">
    <source>
    </source>
</evidence>
<evidence type="ECO:0000269" key="10">
    <source>
    </source>
</evidence>
<keyword id="KW-0903">Direct protein sequencing</keyword>
<keyword id="KW-1035">Host cytoplasm</keyword>
<keyword id="KW-0945">Host-virus interaction</keyword>
<keyword id="KW-1100">Inhibition of host NF-kappa-B by virus</keyword>
<keyword id="KW-0426">Late protein</keyword>
<keyword id="KW-1185">Reference proteome</keyword>
<keyword id="KW-0946">Virion</keyword>
<protein>
    <recommendedName>
        <fullName evidence="1">Ribonucleoside-diphosphate reductase large subunit-like protein</fullName>
    </recommendedName>
    <alternativeName>
        <fullName>Viral inhibitor of RIP activation</fullName>
    </alternativeName>
    <component>
        <recommendedName>
            <fullName>N-terminal peptide</fullName>
        </recommendedName>
    </component>
    <component>
        <recommendedName>
            <fullName>116 kDa peptide</fullName>
        </recommendedName>
    </component>
</protein>
<comment type="function">
    <text evidence="3 5 6 7 8 9 10">Provides optimal viral replication conditions by promoting host cell survival and avoiding the host inflammatory response linked to NF-kappa-B activation. Blocks RIPK1 ubiquitination, thereby preventing NF-kappa-B activation and virally induced inflammatory response. Prevents host necroptosis by targeting RIPK3 thereby preventing the formation of necroptotic RIPK1-RIPK3 complexes. Also inhibits ZBP1-induced necroptosis. Does not have ribonucleotide reductase activity. Betaherpesviruses probably use another strategy to expand the dNTP pool in a quiescent host cell.</text>
</comment>
<comment type="subunit">
    <text evidence="5 6 7 8 10">Self-assembles into homo-oligomeric amyloid fibrils. Interacts with host RIPK1 (via RIP homotypic interaction motif); this interaction inhibits RIPK1 ubiquitination thereby preventing effective activation of host NF-kappa-B. Interacts with host RIPK3 (via RIP homotypic interaction motif); this interaction disrupts RIPK3-RIPK1 interactions characteristic of TNF-alpha induced necroptosis, thereby suppressing this death pathway. Interacts (via RIP homotypic interaction motif) with host ZBP1 (via RIP homotypic interaction motif); this interaction inhibits recruitment of RIPK1 and RIPK3 to ZBP1 and prevents ZBP1-induced NF-kappa-B activation.</text>
</comment>
<comment type="interaction">
    <interactant intactId="EBI-9826498">
        <id>Q06A28</id>
    </interactant>
    <interactant intactId="EBI-8392197">
        <id>Q62172</id>
        <label>Ralbp1</label>
    </interactant>
    <organismsDiffer>true</organismsDiffer>
    <experiments>2</experiments>
</comment>
<comment type="subcellular location">
    <subcellularLocation>
        <location evidence="1 4">Virion</location>
    </subcellularLocation>
    <subcellularLocation>
        <location>Host cytoplasm</location>
    </subcellularLocation>
    <text evidence="1 4">Starts to be expressed at 12 hours after infection and accumulates in the cytoplasm of the infected cells.</text>
</comment>
<comment type="domain">
    <text evidence="10">The N-terminal region drives rapid self-assembly into homo-oligomeric amyloid fibrils and interacts with the RHIMs of host kinases RIPK1 and RIPK3, and ZBP1 to form heteromeric amyloid fibrils.</text>
</comment>
<comment type="PTM">
    <text evidence="4">Undergoes proteolytic cleavage, generating two peptides, a N-terminal and a 116 kDa. The N-terminal peptide retains RIPK1- and RIPK3-binding activity as well as cell death suppression activity.</text>
</comment>
<comment type="similarity">
    <text evidence="1">Belongs to the ribonucleoside diphosphate reductase large chain family.</text>
</comment>
<comment type="caution">
    <text evidence="1">Lacks the conserved sequence Asn-x-Cys-x-Glu essential for ribonucleotide reductase activity.</text>
</comment>
<gene>
    <name evidence="1" type="primary">RIR1</name>
    <name type="synonym">M45</name>
    <name type="synonym">m45.1</name>
</gene>
<reference key="1">
    <citation type="journal article" date="1996" name="J. Virol.">
        <title>Analysis of the complete DNA sequence of murine cytomegalovirus.</title>
        <authorList>
            <person name="Rawlinson W.D."/>
            <person name="Farrell H.E."/>
            <person name="Barrell B.G."/>
        </authorList>
    </citation>
    <scope>NUCLEOTIDE SEQUENCE [LARGE SCALE GENOMIC DNA]</scope>
</reference>
<reference key="2">
    <citation type="journal article" date="2001" name="Science">
        <title>A ribonucleotide reductase homolog of cytomegalovirus and endothelial cell tropism.</title>
        <authorList>
            <person name="Brune W."/>
            <person name="Menard C."/>
            <person name="Heesemann J."/>
            <person name="Koszinowski U.H."/>
        </authorList>
    </citation>
    <scope>NUCLEOTIDE SEQUENCE [GENOMIC DNA]</scope>
    <scope>FUNCTION</scope>
</reference>
<reference key="3">
    <citation type="journal article" date="2008" name="Proc. Natl. Acad. Sci. U.S.A.">
        <title>Inhibition of proinflammatory and innate immune signaling pathways by a cytomegalovirus RIP1-interacting protein.</title>
        <authorList>
            <person name="Mack C."/>
            <person name="Sickmann A."/>
            <person name="Lembo D."/>
            <person name="Brune W."/>
        </authorList>
    </citation>
    <scope>NUCLEOTIDE SEQUENCE [GENOMIC DNA]</scope>
    <scope>FUNCTION</scope>
    <scope>INTERACTION WITH MOUSE RIPK1</scope>
</reference>
<reference key="4">
    <citation type="journal article" date="2010" name="J. Virol.">
        <title>Stability of murine cytomegalovirus genome after in vitro and in vivo passage.</title>
        <authorList>
            <person name="Cheng T.P."/>
            <person name="Valentine M.C."/>
            <person name="Gao J."/>
            <person name="Pingel J.T."/>
            <person name="Yokoyama W.M."/>
        </authorList>
    </citation>
    <scope>NUCLEOTIDE SEQUENCE [GENOMIC DNA]</scope>
</reference>
<reference key="5">
    <citation type="journal article" date="2004" name="J. Virol.">
        <title>The ribonucleotide reductase R1 homolog of murine cytomegalovirus is not a functional enzyme subunit but is required for pathogenesis.</title>
        <authorList>
            <person name="Lembo D."/>
            <person name="Donalisio M."/>
            <person name="Hofer A."/>
            <person name="Cornaglia M."/>
            <person name="Brune W."/>
            <person name="Koszinowski U."/>
            <person name="Thelander L."/>
            <person name="Landolfo S."/>
        </authorList>
    </citation>
    <scope>PROTEIN SEQUENCE OF 278-284</scope>
    <scope>PROTEOLYTIC CLEAVAGE</scope>
    <scope>LACK OF RIBONUCLEOSIDE-DIPHOSPHATE REDUCTASE ACTIVITY</scope>
    <scope>SUBCELLULAR LOCATION</scope>
</reference>
<reference key="6">
    <citation type="journal article" date="2008" name="J. Biol. Chem.">
        <title>Cytomegalovirus M45 cell death suppression requires receptor-interacting protein (RIP) homotypic interaction motif (RHIM)-dependent interaction with RIP1.</title>
        <authorList>
            <person name="Upton J.W."/>
            <person name="Kaiser W.J."/>
            <person name="Mocarski E.S."/>
        </authorList>
    </citation>
    <scope>FUNCTION</scope>
    <scope>INTERACTION WITH MOUSE RIPK1 AND RIPK3</scope>
</reference>
<reference key="7">
    <citation type="journal article" date="2009" name="Trends Biochem. Sci.">
        <title>Tinkering with a viral ribonucleotide reductase.</title>
        <authorList>
            <person name="Lembo D."/>
            <person name="Brune W."/>
        </authorList>
    </citation>
    <scope>REVIEW</scope>
</reference>
<reference key="8">
    <citation type="journal article" date="2009" name="EMBO Rep.">
        <title>DAI/ZBP1 recruits RIP1 and RIP3 through RIP homotypic interaction motifs to activate NF-kappaB.</title>
        <authorList>
            <person name="Rebsamen M."/>
            <person name="Heinz L.X."/>
            <person name="Meylan E."/>
            <person name="Michallet M.C."/>
            <person name="Schroder K."/>
            <person name="Hofmann K."/>
            <person name="Vazquez J."/>
            <person name="Benedict C.A."/>
            <person name="Tschopp J."/>
        </authorList>
    </citation>
    <scope>FUNCTION</scope>
    <scope>INTERACTION WITH MOUSE ZBP1</scope>
</reference>
<reference key="9">
    <citation type="journal article" date="2010" name="Cell Host Microbe">
        <title>Virus inhibition of RIP3-dependent necrosis.</title>
        <authorList>
            <person name="Upton J.W."/>
            <person name="Kaiser W.J."/>
            <person name="Mocarski E.S."/>
        </authorList>
    </citation>
    <scope>FUNCTION</scope>
    <scope>INTERACTION WITH MOUSE RIPK3</scope>
    <scope>MUTAGENESIS OF 61-ILE--GLY-64</scope>
</reference>
<reference key="10">
    <citation type="journal article" date="2017" name="EMBO J.">
        <title>Sensing of viral and endogenous RNA by ZBP1/DAI induces necroptosis.</title>
        <authorList>
            <person name="Maelfait J."/>
            <person name="Liverpool L."/>
            <person name="Bridgeman A."/>
            <person name="Ragan K.B."/>
            <person name="Upton J.W."/>
            <person name="Rehwinkel J."/>
        </authorList>
    </citation>
    <scope>FUNCTION</scope>
    <scope>MUTAGENESIS OF 61-ILE--GLY-64</scope>
</reference>
<reference key="11">
    <citation type="journal article" date="2019" name="EMBO Rep.">
        <title>Viral M45 and necroptosis-associated proteins form heteromeric amyloid assemblies.</title>
        <authorList>
            <person name="Pham C.L."/>
            <person name="Shanmugam N."/>
            <person name="Strange M."/>
            <person name="O'Carroll A."/>
            <person name="Brown J.W."/>
            <person name="Sierecki E."/>
            <person name="Gambin Y."/>
            <person name="Steain M."/>
            <person name="Sunde M."/>
        </authorList>
    </citation>
    <scope>FUNCTION</scope>
    <scope>INTERACTION WITH MOUSE RIPK1; RIPK3 AND ZBP1</scope>
    <scope>DOMAIN</scope>
    <scope>SUBUNIT</scope>
</reference>